<evidence type="ECO:0000255" key="1">
    <source>
        <dbReference type="HAMAP-Rule" id="MF_01342"/>
    </source>
</evidence>
<evidence type="ECO:0000305" key="2"/>
<feature type="chain" id="PRO_1000143006" description="Large ribosomal subunit protein uL16">
    <location>
        <begin position="1"/>
        <end position="142"/>
    </location>
</feature>
<dbReference type="EMBL" id="CP000747">
    <property type="protein sequence ID" value="ACG77651.1"/>
    <property type="molecule type" value="Genomic_DNA"/>
</dbReference>
<dbReference type="RefSeq" id="WP_012521795.1">
    <property type="nucleotide sequence ID" value="NC_011144.1"/>
</dbReference>
<dbReference type="SMR" id="B4R8M4"/>
<dbReference type="STRING" id="450851.PHZ_c1237"/>
<dbReference type="KEGG" id="pzu:PHZ_c1237"/>
<dbReference type="eggNOG" id="COG0197">
    <property type="taxonomic scope" value="Bacteria"/>
</dbReference>
<dbReference type="HOGENOM" id="CLU_078858_2_1_5"/>
<dbReference type="OrthoDB" id="9802589at2"/>
<dbReference type="Proteomes" id="UP000001868">
    <property type="component" value="Chromosome"/>
</dbReference>
<dbReference type="GO" id="GO:0022625">
    <property type="term" value="C:cytosolic large ribosomal subunit"/>
    <property type="evidence" value="ECO:0007669"/>
    <property type="project" value="TreeGrafter"/>
</dbReference>
<dbReference type="GO" id="GO:0019843">
    <property type="term" value="F:rRNA binding"/>
    <property type="evidence" value="ECO:0007669"/>
    <property type="project" value="UniProtKB-UniRule"/>
</dbReference>
<dbReference type="GO" id="GO:0003735">
    <property type="term" value="F:structural constituent of ribosome"/>
    <property type="evidence" value="ECO:0007669"/>
    <property type="project" value="InterPro"/>
</dbReference>
<dbReference type="GO" id="GO:0000049">
    <property type="term" value="F:tRNA binding"/>
    <property type="evidence" value="ECO:0007669"/>
    <property type="project" value="UniProtKB-KW"/>
</dbReference>
<dbReference type="GO" id="GO:0006412">
    <property type="term" value="P:translation"/>
    <property type="evidence" value="ECO:0007669"/>
    <property type="project" value="UniProtKB-UniRule"/>
</dbReference>
<dbReference type="CDD" id="cd01433">
    <property type="entry name" value="Ribosomal_L16_L10e"/>
    <property type="match status" value="1"/>
</dbReference>
<dbReference type="FunFam" id="3.90.1170.10:FF:000001">
    <property type="entry name" value="50S ribosomal protein L16"/>
    <property type="match status" value="1"/>
</dbReference>
<dbReference type="Gene3D" id="3.90.1170.10">
    <property type="entry name" value="Ribosomal protein L10e/L16"/>
    <property type="match status" value="1"/>
</dbReference>
<dbReference type="HAMAP" id="MF_01342">
    <property type="entry name" value="Ribosomal_uL16"/>
    <property type="match status" value="1"/>
</dbReference>
<dbReference type="InterPro" id="IPR047873">
    <property type="entry name" value="Ribosomal_uL16"/>
</dbReference>
<dbReference type="InterPro" id="IPR000114">
    <property type="entry name" value="Ribosomal_uL16_bact-type"/>
</dbReference>
<dbReference type="InterPro" id="IPR020798">
    <property type="entry name" value="Ribosomal_uL16_CS"/>
</dbReference>
<dbReference type="InterPro" id="IPR016180">
    <property type="entry name" value="Ribosomal_uL16_dom"/>
</dbReference>
<dbReference type="InterPro" id="IPR036920">
    <property type="entry name" value="Ribosomal_uL16_sf"/>
</dbReference>
<dbReference type="NCBIfam" id="TIGR01164">
    <property type="entry name" value="rplP_bact"/>
    <property type="match status" value="1"/>
</dbReference>
<dbReference type="PANTHER" id="PTHR12220">
    <property type="entry name" value="50S/60S RIBOSOMAL PROTEIN L16"/>
    <property type="match status" value="1"/>
</dbReference>
<dbReference type="PANTHER" id="PTHR12220:SF13">
    <property type="entry name" value="LARGE RIBOSOMAL SUBUNIT PROTEIN UL16M"/>
    <property type="match status" value="1"/>
</dbReference>
<dbReference type="Pfam" id="PF00252">
    <property type="entry name" value="Ribosomal_L16"/>
    <property type="match status" value="1"/>
</dbReference>
<dbReference type="PRINTS" id="PR00060">
    <property type="entry name" value="RIBOSOMALL16"/>
</dbReference>
<dbReference type="SUPFAM" id="SSF54686">
    <property type="entry name" value="Ribosomal protein L16p/L10e"/>
    <property type="match status" value="1"/>
</dbReference>
<dbReference type="PROSITE" id="PS00586">
    <property type="entry name" value="RIBOSOMAL_L16_1"/>
    <property type="match status" value="1"/>
</dbReference>
<dbReference type="PROSITE" id="PS00701">
    <property type="entry name" value="RIBOSOMAL_L16_2"/>
    <property type="match status" value="1"/>
</dbReference>
<keyword id="KW-1185">Reference proteome</keyword>
<keyword id="KW-0687">Ribonucleoprotein</keyword>
<keyword id="KW-0689">Ribosomal protein</keyword>
<keyword id="KW-0694">RNA-binding</keyword>
<keyword id="KW-0699">rRNA-binding</keyword>
<keyword id="KW-0820">tRNA-binding</keyword>
<organism>
    <name type="scientific">Phenylobacterium zucineum (strain HLK1)</name>
    <dbReference type="NCBI Taxonomy" id="450851"/>
    <lineage>
        <taxon>Bacteria</taxon>
        <taxon>Pseudomonadati</taxon>
        <taxon>Pseudomonadota</taxon>
        <taxon>Alphaproteobacteria</taxon>
        <taxon>Caulobacterales</taxon>
        <taxon>Caulobacteraceae</taxon>
        <taxon>Phenylobacterium</taxon>
    </lineage>
</organism>
<protein>
    <recommendedName>
        <fullName evidence="1">Large ribosomal subunit protein uL16</fullName>
    </recommendedName>
    <alternativeName>
        <fullName evidence="2">50S ribosomal protein L16</fullName>
    </alternativeName>
</protein>
<gene>
    <name evidence="1" type="primary">rplP</name>
    <name type="ordered locus">PHZ_c1237</name>
</gene>
<accession>B4R8M4</accession>
<sequence length="142" mass="15885">MLSPKKTKYRKQFKGRIHGTAKGGFTLNFGSYGLKSMEPERITARQIEAARRAITRQMKRQGRVWIRVFPDVPVTGKPAEVRMGSGKGSVEYWAARVHPGRIMFEIDGVPDDVAREALRLGAAKLPVKTRIVTRIDAAVEHA</sequence>
<comment type="function">
    <text evidence="1">Binds 23S rRNA and is also seen to make contacts with the A and possibly P site tRNAs.</text>
</comment>
<comment type="subunit">
    <text evidence="1">Part of the 50S ribosomal subunit.</text>
</comment>
<comment type="similarity">
    <text evidence="1">Belongs to the universal ribosomal protein uL16 family.</text>
</comment>
<name>RL16_PHEZH</name>
<reference key="1">
    <citation type="journal article" date="2008" name="BMC Genomics">
        <title>Complete genome of Phenylobacterium zucineum - a novel facultative intracellular bacterium isolated from human erythroleukemia cell line K562.</title>
        <authorList>
            <person name="Luo Y."/>
            <person name="Xu X."/>
            <person name="Ding Z."/>
            <person name="Liu Z."/>
            <person name="Zhang B."/>
            <person name="Yan Z."/>
            <person name="Sun J."/>
            <person name="Hu S."/>
            <person name="Hu X."/>
        </authorList>
    </citation>
    <scope>NUCLEOTIDE SEQUENCE [LARGE SCALE GENOMIC DNA]</scope>
    <source>
        <strain>HLK1</strain>
    </source>
</reference>
<proteinExistence type="inferred from homology"/>